<gene>
    <name evidence="1" type="primary">uvrC</name>
    <name type="ordered locus">Tfu_2021</name>
</gene>
<comment type="function">
    <text evidence="1">The UvrABC repair system catalyzes the recognition and processing of DNA lesions. UvrC both incises the 5' and 3' sides of the lesion. The N-terminal half is responsible for the 3' incision and the C-terminal half is responsible for the 5' incision.</text>
</comment>
<comment type="subunit">
    <text evidence="1">Interacts with UvrB in an incision complex.</text>
</comment>
<comment type="subcellular location">
    <subcellularLocation>
        <location evidence="1">Cytoplasm</location>
    </subcellularLocation>
</comment>
<comment type="similarity">
    <text evidence="1">Belongs to the UvrC family.</text>
</comment>
<reference key="1">
    <citation type="journal article" date="2007" name="J. Bacteriol.">
        <title>Genome sequence and analysis of the soil cellulolytic actinomycete Thermobifida fusca YX.</title>
        <authorList>
            <person name="Lykidis A."/>
            <person name="Mavromatis K."/>
            <person name="Ivanova N."/>
            <person name="Anderson I."/>
            <person name="Land M."/>
            <person name="DiBartolo G."/>
            <person name="Martinez M."/>
            <person name="Lapidus A."/>
            <person name="Lucas S."/>
            <person name="Copeland A."/>
            <person name="Richardson P."/>
            <person name="Wilson D.B."/>
            <person name="Kyrpides N."/>
        </authorList>
    </citation>
    <scope>NUCLEOTIDE SEQUENCE [LARGE SCALE GENOMIC DNA]</scope>
    <source>
        <strain>YX</strain>
    </source>
</reference>
<evidence type="ECO:0000255" key="1">
    <source>
        <dbReference type="HAMAP-Rule" id="MF_00203"/>
    </source>
</evidence>
<name>UVRC_THEFY</name>
<organism>
    <name type="scientific">Thermobifida fusca (strain YX)</name>
    <dbReference type="NCBI Taxonomy" id="269800"/>
    <lineage>
        <taxon>Bacteria</taxon>
        <taxon>Bacillati</taxon>
        <taxon>Actinomycetota</taxon>
        <taxon>Actinomycetes</taxon>
        <taxon>Streptosporangiales</taxon>
        <taxon>Nocardiopsidaceae</taxon>
        <taxon>Thermobifida</taxon>
    </lineage>
</organism>
<accession>Q47NB5</accession>
<protein>
    <recommendedName>
        <fullName evidence="1">UvrABC system protein C</fullName>
        <shortName evidence="1">Protein UvrC</shortName>
    </recommendedName>
    <alternativeName>
        <fullName evidence="1">Excinuclease ABC subunit C</fullName>
    </alternativeName>
</protein>
<sequence>MTVRPTLRPKPGSIPTDPGVYRFRDEHGRVIYVGKAKNLRARLSSYFQDFSALHPRTQTMISTAADVDWTVVNTEVEALQLEYSWIKEYSPRFNVRYRDDKSYPYLAVTLNEEFPRVQVMRGARRRGVRYFGPYSYAWAIRDTVDLLLRVFPVRTCSAGVFKRARSSGRPCLLGYIDKCSAPCVGRIGVEEYRALAEDFCAFMAGETGRFLRQLEAEMKQAAAAQEYERAARIRDDIQALRTVMEKQAVVLGDSTDCDVIAIAEDQLEAAVQVFYVRGGRIRGERGWVVDKVEDVSTGKLVEQFLAQTYGGADDEESTTAIPREVLVSAEPADRDAVVAWLSKRRGAAVDVRVPQRGDKRALMETVLKNAEQTLARHKSQRASDLTTRSKALAEIAEALGLAEAPLRIECFDISTLQGEHTVASMVVFEDGLARKSEYRRFSIRGAEGADSDVAAMYEVISRRFTRYLEESQRVGELDTLGESGAPQGAERKAPRFAYPPNLVVVDGGRPQVAAAQRALDDLGIEDVAVCGLAKRLEEVWLPGEEDPIILPRTSEGLYLLQRVRDEAHRFAISYHRRKRAKALTASVLDDIPGLGPVRRAALLKHFGSVRRLAQATAAEIAEVPGIGERTAQTIYERLTSVEGGQRTQPENSKADE</sequence>
<feature type="chain" id="PRO_0000227486" description="UvrABC system protein C">
    <location>
        <begin position="1"/>
        <end position="656"/>
    </location>
</feature>
<feature type="domain" description="GIY-YIG" evidence="1">
    <location>
        <begin position="16"/>
        <end position="95"/>
    </location>
</feature>
<feature type="domain" description="UVR" evidence="1">
    <location>
        <begin position="208"/>
        <end position="243"/>
    </location>
</feature>
<keyword id="KW-0963">Cytoplasm</keyword>
<keyword id="KW-0227">DNA damage</keyword>
<keyword id="KW-0228">DNA excision</keyword>
<keyword id="KW-0234">DNA repair</keyword>
<keyword id="KW-0267">Excision nuclease</keyword>
<keyword id="KW-0742">SOS response</keyword>
<dbReference type="EMBL" id="CP000088">
    <property type="protein sequence ID" value="AAZ56054.1"/>
    <property type="molecule type" value="Genomic_DNA"/>
</dbReference>
<dbReference type="RefSeq" id="WP_011292444.1">
    <property type="nucleotide sequence ID" value="NC_007333.1"/>
</dbReference>
<dbReference type="SMR" id="Q47NB5"/>
<dbReference type="STRING" id="269800.Tfu_2021"/>
<dbReference type="KEGG" id="tfu:Tfu_2021"/>
<dbReference type="eggNOG" id="COG0322">
    <property type="taxonomic scope" value="Bacteria"/>
</dbReference>
<dbReference type="HOGENOM" id="CLU_014841_1_1_11"/>
<dbReference type="OrthoDB" id="9804933at2"/>
<dbReference type="GO" id="GO:0005737">
    <property type="term" value="C:cytoplasm"/>
    <property type="evidence" value="ECO:0007669"/>
    <property type="project" value="UniProtKB-SubCell"/>
</dbReference>
<dbReference type="GO" id="GO:0009380">
    <property type="term" value="C:excinuclease repair complex"/>
    <property type="evidence" value="ECO:0007669"/>
    <property type="project" value="InterPro"/>
</dbReference>
<dbReference type="GO" id="GO:0003677">
    <property type="term" value="F:DNA binding"/>
    <property type="evidence" value="ECO:0007669"/>
    <property type="project" value="UniProtKB-UniRule"/>
</dbReference>
<dbReference type="GO" id="GO:0009381">
    <property type="term" value="F:excinuclease ABC activity"/>
    <property type="evidence" value="ECO:0007669"/>
    <property type="project" value="UniProtKB-UniRule"/>
</dbReference>
<dbReference type="GO" id="GO:0006289">
    <property type="term" value="P:nucleotide-excision repair"/>
    <property type="evidence" value="ECO:0007669"/>
    <property type="project" value="UniProtKB-UniRule"/>
</dbReference>
<dbReference type="GO" id="GO:0009432">
    <property type="term" value="P:SOS response"/>
    <property type="evidence" value="ECO:0007669"/>
    <property type="project" value="UniProtKB-UniRule"/>
</dbReference>
<dbReference type="CDD" id="cd10434">
    <property type="entry name" value="GIY-YIG_UvrC_Cho"/>
    <property type="match status" value="1"/>
</dbReference>
<dbReference type="FunFam" id="1.10.150.20:FF:000005">
    <property type="entry name" value="UvrABC system protein C"/>
    <property type="match status" value="1"/>
</dbReference>
<dbReference type="FunFam" id="3.30.420.340:FF:000003">
    <property type="entry name" value="UvrABC system protein C"/>
    <property type="match status" value="1"/>
</dbReference>
<dbReference type="FunFam" id="3.40.1440.10:FF:000001">
    <property type="entry name" value="UvrABC system protein C"/>
    <property type="match status" value="1"/>
</dbReference>
<dbReference type="Gene3D" id="1.10.150.20">
    <property type="entry name" value="5' to 3' exonuclease, C-terminal subdomain"/>
    <property type="match status" value="1"/>
</dbReference>
<dbReference type="Gene3D" id="3.40.1440.10">
    <property type="entry name" value="GIY-YIG endonuclease"/>
    <property type="match status" value="1"/>
</dbReference>
<dbReference type="Gene3D" id="4.10.860.10">
    <property type="entry name" value="UVR domain"/>
    <property type="match status" value="1"/>
</dbReference>
<dbReference type="Gene3D" id="3.30.420.340">
    <property type="entry name" value="UvrC, RNAse H endonuclease domain"/>
    <property type="match status" value="1"/>
</dbReference>
<dbReference type="HAMAP" id="MF_00203">
    <property type="entry name" value="UvrC"/>
    <property type="match status" value="1"/>
</dbReference>
<dbReference type="InterPro" id="IPR000305">
    <property type="entry name" value="GIY-YIG_endonuc"/>
</dbReference>
<dbReference type="InterPro" id="IPR035901">
    <property type="entry name" value="GIY-YIG_endonuc_sf"/>
</dbReference>
<dbReference type="InterPro" id="IPR047296">
    <property type="entry name" value="GIY-YIG_UvrC_Cho"/>
</dbReference>
<dbReference type="InterPro" id="IPR003583">
    <property type="entry name" value="Hlx-hairpin-Hlx_DNA-bd_motif"/>
</dbReference>
<dbReference type="InterPro" id="IPR010994">
    <property type="entry name" value="RuvA_2-like"/>
</dbReference>
<dbReference type="InterPro" id="IPR001943">
    <property type="entry name" value="UVR_dom"/>
</dbReference>
<dbReference type="InterPro" id="IPR036876">
    <property type="entry name" value="UVR_dom_sf"/>
</dbReference>
<dbReference type="InterPro" id="IPR050066">
    <property type="entry name" value="UvrABC_protein_C"/>
</dbReference>
<dbReference type="InterPro" id="IPR004791">
    <property type="entry name" value="UvrC"/>
</dbReference>
<dbReference type="InterPro" id="IPR001162">
    <property type="entry name" value="UvrC_RNase_H_dom"/>
</dbReference>
<dbReference type="InterPro" id="IPR038476">
    <property type="entry name" value="UvrC_RNase_H_dom_sf"/>
</dbReference>
<dbReference type="NCBIfam" id="NF001824">
    <property type="entry name" value="PRK00558.1-5"/>
    <property type="match status" value="1"/>
</dbReference>
<dbReference type="NCBIfam" id="TIGR00194">
    <property type="entry name" value="uvrC"/>
    <property type="match status" value="1"/>
</dbReference>
<dbReference type="PANTHER" id="PTHR30562:SF1">
    <property type="entry name" value="UVRABC SYSTEM PROTEIN C"/>
    <property type="match status" value="1"/>
</dbReference>
<dbReference type="PANTHER" id="PTHR30562">
    <property type="entry name" value="UVRC/OXIDOREDUCTASE"/>
    <property type="match status" value="1"/>
</dbReference>
<dbReference type="Pfam" id="PF01541">
    <property type="entry name" value="GIY-YIG"/>
    <property type="match status" value="1"/>
</dbReference>
<dbReference type="Pfam" id="PF14520">
    <property type="entry name" value="HHH_5"/>
    <property type="match status" value="1"/>
</dbReference>
<dbReference type="Pfam" id="PF02151">
    <property type="entry name" value="UVR"/>
    <property type="match status" value="1"/>
</dbReference>
<dbReference type="Pfam" id="PF22920">
    <property type="entry name" value="UvrC_RNaseH"/>
    <property type="match status" value="1"/>
</dbReference>
<dbReference type="Pfam" id="PF08459">
    <property type="entry name" value="UvrC_RNaseH_dom"/>
    <property type="match status" value="1"/>
</dbReference>
<dbReference type="SMART" id="SM00465">
    <property type="entry name" value="GIYc"/>
    <property type="match status" value="1"/>
</dbReference>
<dbReference type="SMART" id="SM00278">
    <property type="entry name" value="HhH1"/>
    <property type="match status" value="2"/>
</dbReference>
<dbReference type="SUPFAM" id="SSF46600">
    <property type="entry name" value="C-terminal UvrC-binding domain of UvrB"/>
    <property type="match status" value="1"/>
</dbReference>
<dbReference type="SUPFAM" id="SSF82771">
    <property type="entry name" value="GIY-YIG endonuclease"/>
    <property type="match status" value="1"/>
</dbReference>
<dbReference type="SUPFAM" id="SSF47781">
    <property type="entry name" value="RuvA domain 2-like"/>
    <property type="match status" value="1"/>
</dbReference>
<dbReference type="PROSITE" id="PS50164">
    <property type="entry name" value="GIY_YIG"/>
    <property type="match status" value="1"/>
</dbReference>
<dbReference type="PROSITE" id="PS50151">
    <property type="entry name" value="UVR"/>
    <property type="match status" value="1"/>
</dbReference>
<dbReference type="PROSITE" id="PS50165">
    <property type="entry name" value="UVRC"/>
    <property type="match status" value="1"/>
</dbReference>
<proteinExistence type="inferred from homology"/>